<sequence length="421" mass="46240">MSKDIPPASDFLAILTERGFLHQCSDPAGLDEKAKSGGLIAYIGFDCTAPSLHVGSLVQIMMLRWLQKTGGKPIVLMGGGTTRVGDPSGKDESRKILTLEEIEANKQGIKQVFSKFVHFGEGKTDALMADNAEWLTALHYIDFLRDVGRHFSVNRMLSMDSVKLRLERDQELSFLEFNYMCCQAYDFVELHKRYGCQLQMGGSDQWGNIVTGIDLGRRMGTAQLYALTSPLLTTASGAKMGKTAKGAVWLDEAMLPVFDYWQFWRNCEDRDVGRFLKLFTELPLDEIARLEALQDAEINEAKKILATEATAMVHGREAAERAADTARQTFEEGVVAASLPSVILQTNEIPAEGLGILAAFAKAGLVNSTSEARRQIKGGGLRLNDQPITDEKAVITIEAIEAGAKLSLGRKKHVLLRLADG</sequence>
<organism>
    <name type="scientific">Beijerinckia indica subsp. indica (strain ATCC 9039 / DSM 1715 / NCIMB 8712)</name>
    <dbReference type="NCBI Taxonomy" id="395963"/>
    <lineage>
        <taxon>Bacteria</taxon>
        <taxon>Pseudomonadati</taxon>
        <taxon>Pseudomonadota</taxon>
        <taxon>Alphaproteobacteria</taxon>
        <taxon>Hyphomicrobiales</taxon>
        <taxon>Beijerinckiaceae</taxon>
        <taxon>Beijerinckia</taxon>
    </lineage>
</organism>
<dbReference type="EC" id="6.1.1.1" evidence="1"/>
<dbReference type="EMBL" id="CP001016">
    <property type="protein sequence ID" value="ACB93679.1"/>
    <property type="molecule type" value="Genomic_DNA"/>
</dbReference>
<dbReference type="RefSeq" id="WP_012383037.1">
    <property type="nucleotide sequence ID" value="NC_010581.1"/>
</dbReference>
<dbReference type="SMR" id="B2IAX9"/>
<dbReference type="STRING" id="395963.Bind_0020"/>
<dbReference type="KEGG" id="bid:Bind_0020"/>
<dbReference type="eggNOG" id="COG0162">
    <property type="taxonomic scope" value="Bacteria"/>
</dbReference>
<dbReference type="HOGENOM" id="CLU_024003_0_3_5"/>
<dbReference type="OrthoDB" id="9804243at2"/>
<dbReference type="Proteomes" id="UP000001695">
    <property type="component" value="Chromosome"/>
</dbReference>
<dbReference type="GO" id="GO:0005829">
    <property type="term" value="C:cytosol"/>
    <property type="evidence" value="ECO:0007669"/>
    <property type="project" value="TreeGrafter"/>
</dbReference>
<dbReference type="GO" id="GO:0005524">
    <property type="term" value="F:ATP binding"/>
    <property type="evidence" value="ECO:0007669"/>
    <property type="project" value="UniProtKB-UniRule"/>
</dbReference>
<dbReference type="GO" id="GO:0003723">
    <property type="term" value="F:RNA binding"/>
    <property type="evidence" value="ECO:0007669"/>
    <property type="project" value="UniProtKB-KW"/>
</dbReference>
<dbReference type="GO" id="GO:0004831">
    <property type="term" value="F:tyrosine-tRNA ligase activity"/>
    <property type="evidence" value="ECO:0007669"/>
    <property type="project" value="UniProtKB-UniRule"/>
</dbReference>
<dbReference type="GO" id="GO:0006437">
    <property type="term" value="P:tyrosyl-tRNA aminoacylation"/>
    <property type="evidence" value="ECO:0007669"/>
    <property type="project" value="UniProtKB-UniRule"/>
</dbReference>
<dbReference type="CDD" id="cd00805">
    <property type="entry name" value="TyrRS_core"/>
    <property type="match status" value="1"/>
</dbReference>
<dbReference type="FunFam" id="1.10.240.10:FF:000001">
    <property type="entry name" value="Tyrosine--tRNA ligase"/>
    <property type="match status" value="1"/>
</dbReference>
<dbReference type="FunFam" id="3.40.50.620:FF:000008">
    <property type="entry name" value="Tyrosine--tRNA ligase"/>
    <property type="match status" value="1"/>
</dbReference>
<dbReference type="Gene3D" id="3.40.50.620">
    <property type="entry name" value="HUPs"/>
    <property type="match status" value="1"/>
</dbReference>
<dbReference type="Gene3D" id="3.10.290.10">
    <property type="entry name" value="RNA-binding S4 domain"/>
    <property type="match status" value="1"/>
</dbReference>
<dbReference type="Gene3D" id="1.10.240.10">
    <property type="entry name" value="Tyrosyl-Transfer RNA Synthetase"/>
    <property type="match status" value="1"/>
</dbReference>
<dbReference type="HAMAP" id="MF_02006">
    <property type="entry name" value="Tyr_tRNA_synth_type1"/>
    <property type="match status" value="1"/>
</dbReference>
<dbReference type="InterPro" id="IPR002305">
    <property type="entry name" value="aa-tRNA-synth_Ic"/>
</dbReference>
<dbReference type="InterPro" id="IPR014729">
    <property type="entry name" value="Rossmann-like_a/b/a_fold"/>
</dbReference>
<dbReference type="InterPro" id="IPR036986">
    <property type="entry name" value="S4_RNA-bd_sf"/>
</dbReference>
<dbReference type="InterPro" id="IPR002307">
    <property type="entry name" value="Tyr-tRNA-ligase"/>
</dbReference>
<dbReference type="InterPro" id="IPR024088">
    <property type="entry name" value="Tyr-tRNA-ligase_bac-type"/>
</dbReference>
<dbReference type="InterPro" id="IPR024107">
    <property type="entry name" value="Tyr-tRNA-ligase_bac_1"/>
</dbReference>
<dbReference type="NCBIfam" id="TIGR00234">
    <property type="entry name" value="tyrS"/>
    <property type="match status" value="1"/>
</dbReference>
<dbReference type="PANTHER" id="PTHR11766:SF0">
    <property type="entry name" value="TYROSINE--TRNA LIGASE, MITOCHONDRIAL"/>
    <property type="match status" value="1"/>
</dbReference>
<dbReference type="PANTHER" id="PTHR11766">
    <property type="entry name" value="TYROSYL-TRNA SYNTHETASE"/>
    <property type="match status" value="1"/>
</dbReference>
<dbReference type="Pfam" id="PF00579">
    <property type="entry name" value="tRNA-synt_1b"/>
    <property type="match status" value="1"/>
</dbReference>
<dbReference type="PRINTS" id="PR01040">
    <property type="entry name" value="TRNASYNTHTYR"/>
</dbReference>
<dbReference type="SUPFAM" id="SSF55174">
    <property type="entry name" value="Alpha-L RNA-binding motif"/>
    <property type="match status" value="1"/>
</dbReference>
<dbReference type="SUPFAM" id="SSF52374">
    <property type="entry name" value="Nucleotidylyl transferase"/>
    <property type="match status" value="1"/>
</dbReference>
<dbReference type="PROSITE" id="PS50889">
    <property type="entry name" value="S4"/>
    <property type="match status" value="1"/>
</dbReference>
<evidence type="ECO:0000255" key="1">
    <source>
        <dbReference type="HAMAP-Rule" id="MF_02006"/>
    </source>
</evidence>
<comment type="function">
    <text evidence="1">Catalyzes the attachment of tyrosine to tRNA(Tyr) in a two-step reaction: tyrosine is first activated by ATP to form Tyr-AMP and then transferred to the acceptor end of tRNA(Tyr).</text>
</comment>
<comment type="catalytic activity">
    <reaction evidence="1">
        <text>tRNA(Tyr) + L-tyrosine + ATP = L-tyrosyl-tRNA(Tyr) + AMP + diphosphate + H(+)</text>
        <dbReference type="Rhea" id="RHEA:10220"/>
        <dbReference type="Rhea" id="RHEA-COMP:9706"/>
        <dbReference type="Rhea" id="RHEA-COMP:9707"/>
        <dbReference type="ChEBI" id="CHEBI:15378"/>
        <dbReference type="ChEBI" id="CHEBI:30616"/>
        <dbReference type="ChEBI" id="CHEBI:33019"/>
        <dbReference type="ChEBI" id="CHEBI:58315"/>
        <dbReference type="ChEBI" id="CHEBI:78442"/>
        <dbReference type="ChEBI" id="CHEBI:78536"/>
        <dbReference type="ChEBI" id="CHEBI:456215"/>
        <dbReference type="EC" id="6.1.1.1"/>
    </reaction>
</comment>
<comment type="subunit">
    <text evidence="1">Homodimer.</text>
</comment>
<comment type="subcellular location">
    <subcellularLocation>
        <location evidence="1">Cytoplasm</location>
    </subcellularLocation>
</comment>
<comment type="similarity">
    <text evidence="1">Belongs to the class-I aminoacyl-tRNA synthetase family. TyrS type 1 subfamily.</text>
</comment>
<reference key="1">
    <citation type="journal article" date="2010" name="J. Bacteriol.">
        <title>Complete genome sequence of Beijerinckia indica subsp. indica.</title>
        <authorList>
            <person name="Tamas I."/>
            <person name="Dedysh S.N."/>
            <person name="Liesack W."/>
            <person name="Stott M.B."/>
            <person name="Alam M."/>
            <person name="Murrell J.C."/>
            <person name="Dunfield P.F."/>
        </authorList>
    </citation>
    <scope>NUCLEOTIDE SEQUENCE [LARGE SCALE GENOMIC DNA]</scope>
    <source>
        <strain>ATCC 9039 / DSM 1715 / NCIMB 8712</strain>
    </source>
</reference>
<accession>B2IAX9</accession>
<protein>
    <recommendedName>
        <fullName evidence="1">Tyrosine--tRNA ligase</fullName>
        <ecNumber evidence="1">6.1.1.1</ecNumber>
    </recommendedName>
    <alternativeName>
        <fullName evidence="1">Tyrosyl-tRNA synthetase</fullName>
        <shortName evidence="1">TyrRS</shortName>
    </alternativeName>
</protein>
<keyword id="KW-0030">Aminoacyl-tRNA synthetase</keyword>
<keyword id="KW-0067">ATP-binding</keyword>
<keyword id="KW-0963">Cytoplasm</keyword>
<keyword id="KW-0436">Ligase</keyword>
<keyword id="KW-0547">Nucleotide-binding</keyword>
<keyword id="KW-0648">Protein biosynthesis</keyword>
<keyword id="KW-1185">Reference proteome</keyword>
<keyword id="KW-0694">RNA-binding</keyword>
<gene>
    <name evidence="1" type="primary">tyrS</name>
    <name type="ordered locus">Bind_0020</name>
</gene>
<name>SYY_BEII9</name>
<feature type="chain" id="PRO_1000189257" description="Tyrosine--tRNA ligase">
    <location>
        <begin position="1"/>
        <end position="421"/>
    </location>
</feature>
<feature type="domain" description="S4 RNA-binding" evidence="1">
    <location>
        <begin position="354"/>
        <end position="419"/>
    </location>
</feature>
<feature type="short sequence motif" description="'HIGH' region">
    <location>
        <begin position="47"/>
        <end position="56"/>
    </location>
</feature>
<feature type="short sequence motif" description="'KMSKS' region">
    <location>
        <begin position="239"/>
        <end position="243"/>
    </location>
</feature>
<feature type="binding site" evidence="1">
    <location>
        <position position="42"/>
    </location>
    <ligand>
        <name>L-tyrosine</name>
        <dbReference type="ChEBI" id="CHEBI:58315"/>
    </ligand>
</feature>
<feature type="binding site" evidence="1">
    <location>
        <position position="179"/>
    </location>
    <ligand>
        <name>L-tyrosine</name>
        <dbReference type="ChEBI" id="CHEBI:58315"/>
    </ligand>
</feature>
<feature type="binding site" evidence="1">
    <location>
        <position position="183"/>
    </location>
    <ligand>
        <name>L-tyrosine</name>
        <dbReference type="ChEBI" id="CHEBI:58315"/>
    </ligand>
</feature>
<feature type="binding site" evidence="1">
    <location>
        <position position="242"/>
    </location>
    <ligand>
        <name>ATP</name>
        <dbReference type="ChEBI" id="CHEBI:30616"/>
    </ligand>
</feature>
<proteinExistence type="inferred from homology"/>